<evidence type="ECO:0000255" key="1">
    <source>
        <dbReference type="HAMAP-Rule" id="MF_00210"/>
    </source>
</evidence>
<evidence type="ECO:0000305" key="2"/>
<accession>Q03421</accession>
<gene>
    <name evidence="1" type="primary">aroA</name>
    <name type="ordered locus">HI_1589</name>
</gene>
<name>AROA_HAEIN</name>
<organism>
    <name type="scientific">Haemophilus influenzae (strain ATCC 51907 / DSM 11121 / KW20 / Rd)</name>
    <dbReference type="NCBI Taxonomy" id="71421"/>
    <lineage>
        <taxon>Bacteria</taxon>
        <taxon>Pseudomonadati</taxon>
        <taxon>Pseudomonadota</taxon>
        <taxon>Gammaproteobacteria</taxon>
        <taxon>Pasteurellales</taxon>
        <taxon>Pasteurellaceae</taxon>
        <taxon>Haemophilus</taxon>
    </lineage>
</organism>
<reference key="1">
    <citation type="journal article" date="1993" name="Gene">
        <title>Cloning and sequencing of the Haemophilus influenzae aroA gene.</title>
        <authorList>
            <person name="Maskell D.J."/>
        </authorList>
    </citation>
    <scope>NUCLEOTIDE SEQUENCE [GENOMIC DNA]</scope>
    <source>
        <strain>RM 7004 / Serotype B</strain>
    </source>
</reference>
<reference key="2">
    <citation type="journal article" date="1995" name="Science">
        <title>Whole-genome random sequencing and assembly of Haemophilus influenzae Rd.</title>
        <authorList>
            <person name="Fleischmann R.D."/>
            <person name="Adams M.D."/>
            <person name="White O."/>
            <person name="Clayton R.A."/>
            <person name="Kirkness E.F."/>
            <person name="Kerlavage A.R."/>
            <person name="Bult C.J."/>
            <person name="Tomb J.-F."/>
            <person name="Dougherty B.A."/>
            <person name="Merrick J.M."/>
            <person name="McKenney K."/>
            <person name="Sutton G.G."/>
            <person name="FitzHugh W."/>
            <person name="Fields C.A."/>
            <person name="Gocayne J.D."/>
            <person name="Scott J.D."/>
            <person name="Shirley R."/>
            <person name="Liu L.-I."/>
            <person name="Glodek A."/>
            <person name="Kelley J.M."/>
            <person name="Weidman J.F."/>
            <person name="Phillips C.A."/>
            <person name="Spriggs T."/>
            <person name="Hedblom E."/>
            <person name="Cotton M.D."/>
            <person name="Utterback T.R."/>
            <person name="Hanna M.C."/>
            <person name="Nguyen D.T."/>
            <person name="Saudek D.M."/>
            <person name="Brandon R.C."/>
            <person name="Fine L.D."/>
            <person name="Fritchman J.L."/>
            <person name="Fuhrmann J.L."/>
            <person name="Geoghagen N.S.M."/>
            <person name="Gnehm C.L."/>
            <person name="McDonald L.A."/>
            <person name="Small K.V."/>
            <person name="Fraser C.M."/>
            <person name="Smith H.O."/>
            <person name="Venter J.C."/>
        </authorList>
    </citation>
    <scope>NUCLEOTIDE SEQUENCE [LARGE SCALE GENOMIC DNA]</scope>
    <source>
        <strain>ATCC 51907 / DSM 11121 / KW20 / Rd</strain>
    </source>
</reference>
<protein>
    <recommendedName>
        <fullName evidence="1">3-phosphoshikimate 1-carboxyvinyltransferase</fullName>
        <ecNumber evidence="1">2.5.1.19</ecNumber>
    </recommendedName>
    <alternativeName>
        <fullName evidence="1">5-enolpyruvylshikimate-3-phosphate synthase</fullName>
        <shortName evidence="1">EPSP synthase</shortName>
        <shortName evidence="1">EPSPS</shortName>
    </alternativeName>
</protein>
<feature type="chain" id="PRO_0000088258" description="3-phosphoshikimate 1-carboxyvinyltransferase">
    <location>
        <begin position="1"/>
        <end position="432"/>
    </location>
</feature>
<feature type="active site" description="Proton acceptor" evidence="1">
    <location>
        <position position="316"/>
    </location>
</feature>
<feature type="binding site" evidence="1">
    <location>
        <position position="22"/>
    </location>
    <ligand>
        <name>3-phosphoshikimate</name>
        <dbReference type="ChEBI" id="CHEBI:145989"/>
    </ligand>
</feature>
<feature type="binding site" evidence="1">
    <location>
        <position position="22"/>
    </location>
    <ligand>
        <name>phosphoenolpyruvate</name>
        <dbReference type="ChEBI" id="CHEBI:58702"/>
    </ligand>
</feature>
<feature type="binding site" evidence="1">
    <location>
        <position position="23"/>
    </location>
    <ligand>
        <name>3-phosphoshikimate</name>
        <dbReference type="ChEBI" id="CHEBI:145989"/>
    </ligand>
</feature>
<feature type="binding site" evidence="1">
    <location>
        <position position="27"/>
    </location>
    <ligand>
        <name>3-phosphoshikimate</name>
        <dbReference type="ChEBI" id="CHEBI:145989"/>
    </ligand>
</feature>
<feature type="binding site" evidence="1">
    <location>
        <position position="96"/>
    </location>
    <ligand>
        <name>phosphoenolpyruvate</name>
        <dbReference type="ChEBI" id="CHEBI:58702"/>
    </ligand>
</feature>
<feature type="binding site" evidence="1">
    <location>
        <position position="127"/>
    </location>
    <ligand>
        <name>phosphoenolpyruvate</name>
        <dbReference type="ChEBI" id="CHEBI:58702"/>
    </ligand>
</feature>
<feature type="binding site" evidence="1">
    <location>
        <position position="173"/>
    </location>
    <ligand>
        <name>3-phosphoshikimate</name>
        <dbReference type="ChEBI" id="CHEBI:145989"/>
    </ligand>
</feature>
<feature type="binding site" evidence="1">
    <location>
        <position position="174"/>
    </location>
    <ligand>
        <name>3-phosphoshikimate</name>
        <dbReference type="ChEBI" id="CHEBI:145989"/>
    </ligand>
</feature>
<feature type="binding site" evidence="1">
    <location>
        <position position="175"/>
    </location>
    <ligand>
        <name>3-phosphoshikimate</name>
        <dbReference type="ChEBI" id="CHEBI:145989"/>
    </ligand>
</feature>
<feature type="binding site" evidence="1">
    <location>
        <position position="175"/>
    </location>
    <ligand>
        <name>phosphoenolpyruvate</name>
        <dbReference type="ChEBI" id="CHEBI:58702"/>
    </ligand>
</feature>
<feature type="binding site" evidence="1">
    <location>
        <position position="201"/>
    </location>
    <ligand>
        <name>3-phosphoshikimate</name>
        <dbReference type="ChEBI" id="CHEBI:145989"/>
    </ligand>
</feature>
<feature type="binding site" evidence="1">
    <location>
        <position position="316"/>
    </location>
    <ligand>
        <name>3-phosphoshikimate</name>
        <dbReference type="ChEBI" id="CHEBI:145989"/>
    </ligand>
</feature>
<feature type="binding site" evidence="1">
    <location>
        <position position="339"/>
    </location>
    <ligand>
        <name>3-phosphoshikimate</name>
        <dbReference type="ChEBI" id="CHEBI:145989"/>
    </ligand>
</feature>
<feature type="binding site" evidence="1">
    <location>
        <position position="343"/>
    </location>
    <ligand>
        <name>3-phosphoshikimate</name>
        <dbReference type="ChEBI" id="CHEBI:145989"/>
    </ligand>
</feature>
<feature type="binding site" evidence="1">
    <location>
        <position position="347"/>
    </location>
    <ligand>
        <name>phosphoenolpyruvate</name>
        <dbReference type="ChEBI" id="CHEBI:58702"/>
    </ligand>
</feature>
<feature type="binding site" evidence="1">
    <location>
        <position position="391"/>
    </location>
    <ligand>
        <name>phosphoenolpyruvate</name>
        <dbReference type="ChEBI" id="CHEBI:58702"/>
    </ligand>
</feature>
<feature type="binding site" evidence="1">
    <location>
        <position position="416"/>
    </location>
    <ligand>
        <name>phosphoenolpyruvate</name>
        <dbReference type="ChEBI" id="CHEBI:58702"/>
    </ligand>
</feature>
<feature type="sequence conflict" description="In Ref. 1; AAA24943." evidence="2" ref="1">
    <original>V</original>
    <variation>I</variation>
    <location>
        <position position="75"/>
    </location>
</feature>
<feature type="sequence conflict" description="In Ref. 1; AAA24943." evidence="2" ref="1">
    <original>T</original>
    <variation>A</variation>
    <location>
        <position position="81"/>
    </location>
</feature>
<feature type="sequence conflict" description="In Ref. 1; AAA24943." evidence="2" ref="1">
    <original>KT</original>
    <variation>NH</variation>
    <location>
        <begin position="111"/>
        <end position="112"/>
    </location>
</feature>
<feature type="sequence conflict" description="In Ref. 1; AAA24943." evidence="2" ref="1">
    <original>S</original>
    <variation>V</variation>
    <location>
        <position position="114"/>
    </location>
</feature>
<feature type="sequence conflict" description="In Ref. 1; AAA24943." evidence="2" ref="1">
    <original>Q</original>
    <variation>K</variation>
    <location>
        <position position="218"/>
    </location>
</feature>
<feature type="sequence conflict" description="In Ref. 1; AAA24943." evidence="2" ref="1">
    <original>A</original>
    <variation>S</variation>
    <location>
        <position position="328"/>
    </location>
</feature>
<feature type="sequence conflict" description="In Ref. 1; AAA24943." evidence="2" ref="1">
    <original>S</original>
    <variation>G</variation>
    <location>
        <position position="330"/>
    </location>
</feature>
<feature type="sequence conflict" description="In Ref. 1; AAA24943." evidence="2" ref="1">
    <original>G</original>
    <variation>E</variation>
    <location>
        <position position="364"/>
    </location>
</feature>
<feature type="sequence conflict" description="In Ref. 1; AAA24943." evidence="2" ref="1">
    <original>P</original>
    <variation>A</variation>
    <location>
        <position position="375"/>
    </location>
</feature>
<comment type="function">
    <text evidence="1">Catalyzes the transfer of the enolpyruvyl moiety of phosphoenolpyruvate (PEP) to the 5-hydroxyl of shikimate-3-phosphate (S3P) to produce enolpyruvyl shikimate-3-phosphate and inorganic phosphate.</text>
</comment>
<comment type="catalytic activity">
    <reaction evidence="1">
        <text>3-phosphoshikimate + phosphoenolpyruvate = 5-O-(1-carboxyvinyl)-3-phosphoshikimate + phosphate</text>
        <dbReference type="Rhea" id="RHEA:21256"/>
        <dbReference type="ChEBI" id="CHEBI:43474"/>
        <dbReference type="ChEBI" id="CHEBI:57701"/>
        <dbReference type="ChEBI" id="CHEBI:58702"/>
        <dbReference type="ChEBI" id="CHEBI:145989"/>
        <dbReference type="EC" id="2.5.1.19"/>
    </reaction>
    <physiologicalReaction direction="left-to-right" evidence="1">
        <dbReference type="Rhea" id="RHEA:21257"/>
    </physiologicalReaction>
</comment>
<comment type="pathway">
    <text evidence="1">Metabolic intermediate biosynthesis; chorismate biosynthesis; chorismate from D-erythrose 4-phosphate and phosphoenolpyruvate: step 6/7.</text>
</comment>
<comment type="subunit">
    <text evidence="1">Monomer.</text>
</comment>
<comment type="subcellular location">
    <subcellularLocation>
        <location evidence="1">Cytoplasm</location>
    </subcellularLocation>
</comment>
<comment type="similarity">
    <text evidence="1 2">Belongs to the EPSP synthase family.</text>
</comment>
<dbReference type="EC" id="2.5.1.19" evidence="1"/>
<dbReference type="EMBL" id="L04686">
    <property type="protein sequence ID" value="AAA24943.1"/>
    <property type="molecule type" value="Genomic_DNA"/>
</dbReference>
<dbReference type="EMBL" id="L42023">
    <property type="protein sequence ID" value="AAC23237.1"/>
    <property type="molecule type" value="Genomic_DNA"/>
</dbReference>
<dbReference type="PIR" id="JN0758">
    <property type="entry name" value="JN0758"/>
</dbReference>
<dbReference type="RefSeq" id="NP_439734.1">
    <property type="nucleotide sequence ID" value="NC_000907.1"/>
</dbReference>
<dbReference type="SMR" id="Q03421"/>
<dbReference type="STRING" id="71421.HI_1589"/>
<dbReference type="EnsemblBacteria" id="AAC23237">
    <property type="protein sequence ID" value="AAC23237"/>
    <property type="gene ID" value="HI_1589"/>
</dbReference>
<dbReference type="KEGG" id="hin:HI_1589"/>
<dbReference type="PATRIC" id="fig|71421.8.peg.1663"/>
<dbReference type="eggNOG" id="COG0128">
    <property type="taxonomic scope" value="Bacteria"/>
</dbReference>
<dbReference type="HOGENOM" id="CLU_024321_0_0_6"/>
<dbReference type="OrthoDB" id="9809920at2"/>
<dbReference type="PhylomeDB" id="Q03421"/>
<dbReference type="BioCyc" id="HINF71421:G1GJ1-1605-MONOMER"/>
<dbReference type="UniPathway" id="UPA00053">
    <property type="reaction ID" value="UER00089"/>
</dbReference>
<dbReference type="Proteomes" id="UP000000579">
    <property type="component" value="Chromosome"/>
</dbReference>
<dbReference type="GO" id="GO:0005737">
    <property type="term" value="C:cytoplasm"/>
    <property type="evidence" value="ECO:0007669"/>
    <property type="project" value="UniProtKB-SubCell"/>
</dbReference>
<dbReference type="GO" id="GO:0003866">
    <property type="term" value="F:3-phosphoshikimate 1-carboxyvinyltransferase activity"/>
    <property type="evidence" value="ECO:0000318"/>
    <property type="project" value="GO_Central"/>
</dbReference>
<dbReference type="GO" id="GO:0008652">
    <property type="term" value="P:amino acid biosynthetic process"/>
    <property type="evidence" value="ECO:0007669"/>
    <property type="project" value="UniProtKB-KW"/>
</dbReference>
<dbReference type="GO" id="GO:0009073">
    <property type="term" value="P:aromatic amino acid family biosynthetic process"/>
    <property type="evidence" value="ECO:0007669"/>
    <property type="project" value="UniProtKB-KW"/>
</dbReference>
<dbReference type="GO" id="GO:0009423">
    <property type="term" value="P:chorismate biosynthetic process"/>
    <property type="evidence" value="ECO:0000318"/>
    <property type="project" value="GO_Central"/>
</dbReference>
<dbReference type="CDD" id="cd01556">
    <property type="entry name" value="EPSP_synthase"/>
    <property type="match status" value="1"/>
</dbReference>
<dbReference type="FunFam" id="3.65.10.10:FF:000003">
    <property type="entry name" value="3-phosphoshikimate 1-carboxyvinyltransferase"/>
    <property type="match status" value="1"/>
</dbReference>
<dbReference type="FunFam" id="3.65.10.10:FF:000004">
    <property type="entry name" value="3-phosphoshikimate 1-carboxyvinyltransferase"/>
    <property type="match status" value="1"/>
</dbReference>
<dbReference type="Gene3D" id="3.65.10.10">
    <property type="entry name" value="Enolpyruvate transferase domain"/>
    <property type="match status" value="2"/>
</dbReference>
<dbReference type="HAMAP" id="MF_00210">
    <property type="entry name" value="EPSP_synth"/>
    <property type="match status" value="1"/>
</dbReference>
<dbReference type="InterPro" id="IPR001986">
    <property type="entry name" value="Enolpyruvate_Tfrase_dom"/>
</dbReference>
<dbReference type="InterPro" id="IPR036968">
    <property type="entry name" value="Enolpyruvate_Tfrase_sf"/>
</dbReference>
<dbReference type="InterPro" id="IPR006264">
    <property type="entry name" value="EPSP_synthase"/>
</dbReference>
<dbReference type="InterPro" id="IPR023193">
    <property type="entry name" value="EPSP_synthase_CS"/>
</dbReference>
<dbReference type="InterPro" id="IPR013792">
    <property type="entry name" value="RNA3'P_cycl/enolpyr_Trfase_a/b"/>
</dbReference>
<dbReference type="NCBIfam" id="TIGR01356">
    <property type="entry name" value="aroA"/>
    <property type="match status" value="1"/>
</dbReference>
<dbReference type="PANTHER" id="PTHR21090">
    <property type="entry name" value="AROM/DEHYDROQUINATE SYNTHASE"/>
    <property type="match status" value="1"/>
</dbReference>
<dbReference type="PANTHER" id="PTHR21090:SF5">
    <property type="entry name" value="PENTAFUNCTIONAL AROM POLYPEPTIDE"/>
    <property type="match status" value="1"/>
</dbReference>
<dbReference type="Pfam" id="PF00275">
    <property type="entry name" value="EPSP_synthase"/>
    <property type="match status" value="1"/>
</dbReference>
<dbReference type="PIRSF" id="PIRSF000505">
    <property type="entry name" value="EPSPS"/>
    <property type="match status" value="1"/>
</dbReference>
<dbReference type="SUPFAM" id="SSF55205">
    <property type="entry name" value="EPT/RTPC-like"/>
    <property type="match status" value="1"/>
</dbReference>
<dbReference type="PROSITE" id="PS00104">
    <property type="entry name" value="EPSP_SYNTHASE_1"/>
    <property type="match status" value="1"/>
</dbReference>
<dbReference type="PROSITE" id="PS00885">
    <property type="entry name" value="EPSP_SYNTHASE_2"/>
    <property type="match status" value="1"/>
</dbReference>
<proteinExistence type="inferred from homology"/>
<sequence length="432" mass="47413">MEKITLAPISAVEGTINLPGSKSLSNRALLLAALAKGTTKVTNLLDSDDIRHMLNALKALGVRYQLSDDKTICEVEGLGGTFNIQDNLSLFLGNAGTAMRPLTAALCLKGKTESEIILTGEPRMKERPILHLVDALRQAGADIRYLENEGYPPLAIRNKGIKGGKVKIDGSISSQFLTALLMSAPLAENDTEIEIIGELVSKPYIDITLAMMRDFGVQVENHHYQKFQVKGNQSYISPNKYLVEGDASSASYFLAAGAIKGKVKVTGIGKNSIQGDRLFADVLEKMGAKITWGEDFIQAEHAELNGIDMDMNHIPDAAMTIATTALFANSETVIRNIYNWRVKETDRLTAMATELRKVGAEVEGGEDFIRIQPLPLNQFKHANIETYNDHRMAMCFSLIALSNTPVTILDPKCTAKTFPTFFNEFEKICLKN</sequence>
<keyword id="KW-0028">Amino-acid biosynthesis</keyword>
<keyword id="KW-0057">Aromatic amino acid biosynthesis</keyword>
<keyword id="KW-0963">Cytoplasm</keyword>
<keyword id="KW-1185">Reference proteome</keyword>
<keyword id="KW-0808">Transferase</keyword>